<dbReference type="EC" id="1.17.7.4" evidence="1"/>
<dbReference type="EMBL" id="CP000381">
    <property type="protein sequence ID" value="ABX72597.1"/>
    <property type="molecule type" value="Genomic_DNA"/>
</dbReference>
<dbReference type="RefSeq" id="WP_012221293.1">
    <property type="nucleotide sequence ID" value="NC_010120.1"/>
</dbReference>
<dbReference type="SMR" id="A9M1J9"/>
<dbReference type="KEGG" id="nmn:NMCC_0391"/>
<dbReference type="HOGENOM" id="CLU_027486_1_0_4"/>
<dbReference type="UniPathway" id="UPA00056">
    <property type="reaction ID" value="UER00097"/>
</dbReference>
<dbReference type="UniPathway" id="UPA00059">
    <property type="reaction ID" value="UER00105"/>
</dbReference>
<dbReference type="Proteomes" id="UP000001177">
    <property type="component" value="Chromosome"/>
</dbReference>
<dbReference type="GO" id="GO:0051539">
    <property type="term" value="F:4 iron, 4 sulfur cluster binding"/>
    <property type="evidence" value="ECO:0007669"/>
    <property type="project" value="UniProtKB-UniRule"/>
</dbReference>
<dbReference type="GO" id="GO:0051745">
    <property type="term" value="F:4-hydroxy-3-methylbut-2-enyl diphosphate reductase activity"/>
    <property type="evidence" value="ECO:0007669"/>
    <property type="project" value="UniProtKB-UniRule"/>
</dbReference>
<dbReference type="GO" id="GO:0046872">
    <property type="term" value="F:metal ion binding"/>
    <property type="evidence" value="ECO:0007669"/>
    <property type="project" value="UniProtKB-KW"/>
</dbReference>
<dbReference type="GO" id="GO:0050992">
    <property type="term" value="P:dimethylallyl diphosphate biosynthetic process"/>
    <property type="evidence" value="ECO:0007669"/>
    <property type="project" value="UniProtKB-UniRule"/>
</dbReference>
<dbReference type="GO" id="GO:0019288">
    <property type="term" value="P:isopentenyl diphosphate biosynthetic process, methylerythritol 4-phosphate pathway"/>
    <property type="evidence" value="ECO:0007669"/>
    <property type="project" value="UniProtKB-UniRule"/>
</dbReference>
<dbReference type="GO" id="GO:0016114">
    <property type="term" value="P:terpenoid biosynthetic process"/>
    <property type="evidence" value="ECO:0007669"/>
    <property type="project" value="UniProtKB-UniRule"/>
</dbReference>
<dbReference type="CDD" id="cd13944">
    <property type="entry name" value="lytB_ispH"/>
    <property type="match status" value="1"/>
</dbReference>
<dbReference type="Gene3D" id="3.40.50.11270">
    <property type="match status" value="1"/>
</dbReference>
<dbReference type="Gene3D" id="3.40.1010.20">
    <property type="entry name" value="4-hydroxy-3-methylbut-2-enyl diphosphate reductase, catalytic domain"/>
    <property type="match status" value="2"/>
</dbReference>
<dbReference type="HAMAP" id="MF_00191">
    <property type="entry name" value="IspH"/>
    <property type="match status" value="1"/>
</dbReference>
<dbReference type="InterPro" id="IPR003451">
    <property type="entry name" value="LytB/IspH"/>
</dbReference>
<dbReference type="NCBIfam" id="TIGR00216">
    <property type="entry name" value="ispH_lytB"/>
    <property type="match status" value="1"/>
</dbReference>
<dbReference type="NCBIfam" id="NF002188">
    <property type="entry name" value="PRK01045.1-2"/>
    <property type="match status" value="1"/>
</dbReference>
<dbReference type="NCBIfam" id="NF002189">
    <property type="entry name" value="PRK01045.1-3"/>
    <property type="match status" value="1"/>
</dbReference>
<dbReference type="NCBIfam" id="NF002190">
    <property type="entry name" value="PRK01045.1-4"/>
    <property type="match status" value="1"/>
</dbReference>
<dbReference type="PANTHER" id="PTHR30426">
    <property type="entry name" value="4-HYDROXY-3-METHYLBUT-2-ENYL DIPHOSPHATE REDUCTASE"/>
    <property type="match status" value="1"/>
</dbReference>
<dbReference type="PANTHER" id="PTHR30426:SF0">
    <property type="entry name" value="4-HYDROXY-3-METHYLBUT-2-ENYL DIPHOSPHATE REDUCTASE"/>
    <property type="match status" value="1"/>
</dbReference>
<dbReference type="Pfam" id="PF02401">
    <property type="entry name" value="LYTB"/>
    <property type="match status" value="1"/>
</dbReference>
<gene>
    <name evidence="1" type="primary">ispH</name>
    <name type="ordered locus">NMCC_0391</name>
</gene>
<sequence>MNGKTIILANPRGFCAGVDRAISIVERALEEFGAPIYVRHEVVHNKFVVDNLREKGAVFIEDLAEVPPGATLIYSAHGVSKAVQQEAAERGFRVFDATCPLVTKVHKEVARLDAQDCEIIMIGHKGHVEVEGTMGQLAPGKMLLVETVGDVAKLEVRNPDKLAYVSQTTLSVDETKDIIAALNARFPNIRNPHKEDICYATTNRQTAVKELAEQCDIVIVVGSPNSSNSNRLREVAAGIGTDAYMVDNASYLQRAWFEGKNKVGVTAGASAPEVLVQEVLATIRRWGHETVREGEGAEESIVFVLPKELRREGETKPDLCKR</sequence>
<reference key="1">
    <citation type="journal article" date="2008" name="Genomics">
        <title>Characterization of ST-4821 complex, a unique Neisseria meningitidis clone.</title>
        <authorList>
            <person name="Peng J."/>
            <person name="Yang L."/>
            <person name="Yang F."/>
            <person name="Yang J."/>
            <person name="Yan Y."/>
            <person name="Nie H."/>
            <person name="Zhang X."/>
            <person name="Xiong Z."/>
            <person name="Jiang Y."/>
            <person name="Cheng F."/>
            <person name="Xu X."/>
            <person name="Chen S."/>
            <person name="Sun L."/>
            <person name="Li W."/>
            <person name="Shen Y."/>
            <person name="Shao Z."/>
            <person name="Liang X."/>
            <person name="Xu J."/>
            <person name="Jin Q."/>
        </authorList>
    </citation>
    <scope>NUCLEOTIDE SEQUENCE [LARGE SCALE GENOMIC DNA]</scope>
    <source>
        <strain>053442</strain>
    </source>
</reference>
<proteinExistence type="inferred from homology"/>
<organism>
    <name type="scientific">Neisseria meningitidis serogroup C (strain 053442)</name>
    <dbReference type="NCBI Taxonomy" id="374833"/>
    <lineage>
        <taxon>Bacteria</taxon>
        <taxon>Pseudomonadati</taxon>
        <taxon>Pseudomonadota</taxon>
        <taxon>Betaproteobacteria</taxon>
        <taxon>Neisseriales</taxon>
        <taxon>Neisseriaceae</taxon>
        <taxon>Neisseria</taxon>
    </lineage>
</organism>
<feature type="chain" id="PRO_1000077521" description="4-hydroxy-3-methylbut-2-enyl diphosphate reductase">
    <location>
        <begin position="1"/>
        <end position="322"/>
    </location>
</feature>
<feature type="active site" description="Proton donor" evidence="1">
    <location>
        <position position="129"/>
    </location>
</feature>
<feature type="binding site" evidence="1">
    <location>
        <position position="15"/>
    </location>
    <ligand>
        <name>[4Fe-4S] cluster</name>
        <dbReference type="ChEBI" id="CHEBI:49883"/>
    </ligand>
</feature>
<feature type="binding site" evidence="1">
    <location>
        <position position="44"/>
    </location>
    <ligand>
        <name>(2E)-4-hydroxy-3-methylbut-2-enyl diphosphate</name>
        <dbReference type="ChEBI" id="CHEBI:128753"/>
    </ligand>
</feature>
<feature type="binding site" evidence="1">
    <location>
        <position position="44"/>
    </location>
    <ligand>
        <name>dimethylallyl diphosphate</name>
        <dbReference type="ChEBI" id="CHEBI:57623"/>
    </ligand>
</feature>
<feature type="binding site" evidence="1">
    <location>
        <position position="44"/>
    </location>
    <ligand>
        <name>isopentenyl diphosphate</name>
        <dbReference type="ChEBI" id="CHEBI:128769"/>
    </ligand>
</feature>
<feature type="binding site" evidence="1">
    <location>
        <position position="77"/>
    </location>
    <ligand>
        <name>(2E)-4-hydroxy-3-methylbut-2-enyl diphosphate</name>
        <dbReference type="ChEBI" id="CHEBI:128753"/>
    </ligand>
</feature>
<feature type="binding site" evidence="1">
    <location>
        <position position="77"/>
    </location>
    <ligand>
        <name>dimethylallyl diphosphate</name>
        <dbReference type="ChEBI" id="CHEBI:57623"/>
    </ligand>
</feature>
<feature type="binding site" evidence="1">
    <location>
        <position position="77"/>
    </location>
    <ligand>
        <name>isopentenyl diphosphate</name>
        <dbReference type="ChEBI" id="CHEBI:128769"/>
    </ligand>
</feature>
<feature type="binding site" evidence="1">
    <location>
        <position position="99"/>
    </location>
    <ligand>
        <name>[4Fe-4S] cluster</name>
        <dbReference type="ChEBI" id="CHEBI:49883"/>
    </ligand>
</feature>
<feature type="binding site" evidence="1">
    <location>
        <position position="127"/>
    </location>
    <ligand>
        <name>(2E)-4-hydroxy-3-methylbut-2-enyl diphosphate</name>
        <dbReference type="ChEBI" id="CHEBI:128753"/>
    </ligand>
</feature>
<feature type="binding site" evidence="1">
    <location>
        <position position="127"/>
    </location>
    <ligand>
        <name>dimethylallyl diphosphate</name>
        <dbReference type="ChEBI" id="CHEBI:57623"/>
    </ligand>
</feature>
<feature type="binding site" evidence="1">
    <location>
        <position position="127"/>
    </location>
    <ligand>
        <name>isopentenyl diphosphate</name>
        <dbReference type="ChEBI" id="CHEBI:128769"/>
    </ligand>
</feature>
<feature type="binding site" evidence="1">
    <location>
        <position position="168"/>
    </location>
    <ligand>
        <name>(2E)-4-hydroxy-3-methylbut-2-enyl diphosphate</name>
        <dbReference type="ChEBI" id="CHEBI:128753"/>
    </ligand>
</feature>
<feature type="binding site" evidence="1">
    <location>
        <position position="198"/>
    </location>
    <ligand>
        <name>[4Fe-4S] cluster</name>
        <dbReference type="ChEBI" id="CHEBI:49883"/>
    </ligand>
</feature>
<feature type="binding site" evidence="1">
    <location>
        <position position="226"/>
    </location>
    <ligand>
        <name>(2E)-4-hydroxy-3-methylbut-2-enyl diphosphate</name>
        <dbReference type="ChEBI" id="CHEBI:128753"/>
    </ligand>
</feature>
<feature type="binding site" evidence="1">
    <location>
        <position position="226"/>
    </location>
    <ligand>
        <name>dimethylallyl diphosphate</name>
        <dbReference type="ChEBI" id="CHEBI:57623"/>
    </ligand>
</feature>
<feature type="binding site" evidence="1">
    <location>
        <position position="226"/>
    </location>
    <ligand>
        <name>isopentenyl diphosphate</name>
        <dbReference type="ChEBI" id="CHEBI:128769"/>
    </ligand>
</feature>
<feature type="binding site" evidence="1">
    <location>
        <position position="227"/>
    </location>
    <ligand>
        <name>(2E)-4-hydroxy-3-methylbut-2-enyl diphosphate</name>
        <dbReference type="ChEBI" id="CHEBI:128753"/>
    </ligand>
</feature>
<feature type="binding site" evidence="1">
    <location>
        <position position="227"/>
    </location>
    <ligand>
        <name>dimethylallyl diphosphate</name>
        <dbReference type="ChEBI" id="CHEBI:57623"/>
    </ligand>
</feature>
<feature type="binding site" evidence="1">
    <location>
        <position position="227"/>
    </location>
    <ligand>
        <name>isopentenyl diphosphate</name>
        <dbReference type="ChEBI" id="CHEBI:128769"/>
    </ligand>
</feature>
<feature type="binding site" evidence="1">
    <location>
        <position position="228"/>
    </location>
    <ligand>
        <name>(2E)-4-hydroxy-3-methylbut-2-enyl diphosphate</name>
        <dbReference type="ChEBI" id="CHEBI:128753"/>
    </ligand>
</feature>
<feature type="binding site" evidence="1">
    <location>
        <position position="228"/>
    </location>
    <ligand>
        <name>dimethylallyl diphosphate</name>
        <dbReference type="ChEBI" id="CHEBI:57623"/>
    </ligand>
</feature>
<feature type="binding site" evidence="1">
    <location>
        <position position="228"/>
    </location>
    <ligand>
        <name>isopentenyl diphosphate</name>
        <dbReference type="ChEBI" id="CHEBI:128769"/>
    </ligand>
</feature>
<feature type="binding site" evidence="1">
    <location>
        <position position="270"/>
    </location>
    <ligand>
        <name>(2E)-4-hydroxy-3-methylbut-2-enyl diphosphate</name>
        <dbReference type="ChEBI" id="CHEBI:128753"/>
    </ligand>
</feature>
<feature type="binding site" evidence="1">
    <location>
        <position position="270"/>
    </location>
    <ligand>
        <name>dimethylallyl diphosphate</name>
        <dbReference type="ChEBI" id="CHEBI:57623"/>
    </ligand>
</feature>
<feature type="binding site" evidence="1">
    <location>
        <position position="270"/>
    </location>
    <ligand>
        <name>isopentenyl diphosphate</name>
        <dbReference type="ChEBI" id="CHEBI:128769"/>
    </ligand>
</feature>
<keyword id="KW-0004">4Fe-4S</keyword>
<keyword id="KW-0408">Iron</keyword>
<keyword id="KW-0411">Iron-sulfur</keyword>
<keyword id="KW-0414">Isoprene biosynthesis</keyword>
<keyword id="KW-0479">Metal-binding</keyword>
<keyword id="KW-0560">Oxidoreductase</keyword>
<accession>A9M1J9</accession>
<evidence type="ECO:0000255" key="1">
    <source>
        <dbReference type="HAMAP-Rule" id="MF_00191"/>
    </source>
</evidence>
<name>ISPH_NEIM0</name>
<protein>
    <recommendedName>
        <fullName evidence="1">4-hydroxy-3-methylbut-2-enyl diphosphate reductase</fullName>
        <shortName evidence="1">HMBPP reductase</shortName>
        <ecNumber evidence="1">1.17.7.4</ecNumber>
    </recommendedName>
</protein>
<comment type="function">
    <text evidence="1">Catalyzes the conversion of 1-hydroxy-2-methyl-2-(E)-butenyl 4-diphosphate (HMBPP) into a mixture of isopentenyl diphosphate (IPP) and dimethylallyl diphosphate (DMAPP). Acts in the terminal step of the DOXP/MEP pathway for isoprenoid precursor biosynthesis.</text>
</comment>
<comment type="catalytic activity">
    <reaction evidence="1">
        <text>isopentenyl diphosphate + 2 oxidized [2Fe-2S]-[ferredoxin] + H2O = (2E)-4-hydroxy-3-methylbut-2-enyl diphosphate + 2 reduced [2Fe-2S]-[ferredoxin] + 2 H(+)</text>
        <dbReference type="Rhea" id="RHEA:24488"/>
        <dbReference type="Rhea" id="RHEA-COMP:10000"/>
        <dbReference type="Rhea" id="RHEA-COMP:10001"/>
        <dbReference type="ChEBI" id="CHEBI:15377"/>
        <dbReference type="ChEBI" id="CHEBI:15378"/>
        <dbReference type="ChEBI" id="CHEBI:33737"/>
        <dbReference type="ChEBI" id="CHEBI:33738"/>
        <dbReference type="ChEBI" id="CHEBI:128753"/>
        <dbReference type="ChEBI" id="CHEBI:128769"/>
        <dbReference type="EC" id="1.17.7.4"/>
    </reaction>
</comment>
<comment type="catalytic activity">
    <reaction evidence="1">
        <text>dimethylallyl diphosphate + 2 oxidized [2Fe-2S]-[ferredoxin] + H2O = (2E)-4-hydroxy-3-methylbut-2-enyl diphosphate + 2 reduced [2Fe-2S]-[ferredoxin] + 2 H(+)</text>
        <dbReference type="Rhea" id="RHEA:24825"/>
        <dbReference type="Rhea" id="RHEA-COMP:10000"/>
        <dbReference type="Rhea" id="RHEA-COMP:10001"/>
        <dbReference type="ChEBI" id="CHEBI:15377"/>
        <dbReference type="ChEBI" id="CHEBI:15378"/>
        <dbReference type="ChEBI" id="CHEBI:33737"/>
        <dbReference type="ChEBI" id="CHEBI:33738"/>
        <dbReference type="ChEBI" id="CHEBI:57623"/>
        <dbReference type="ChEBI" id="CHEBI:128753"/>
        <dbReference type="EC" id="1.17.7.4"/>
    </reaction>
</comment>
<comment type="cofactor">
    <cofactor evidence="1">
        <name>[4Fe-4S] cluster</name>
        <dbReference type="ChEBI" id="CHEBI:49883"/>
    </cofactor>
    <text evidence="1">Binds 1 [4Fe-4S] cluster per subunit.</text>
</comment>
<comment type="pathway">
    <text evidence="1">Isoprenoid biosynthesis; dimethylallyl diphosphate biosynthesis; dimethylallyl diphosphate from (2E)-4-hydroxy-3-methylbutenyl diphosphate: step 1/1.</text>
</comment>
<comment type="pathway">
    <text evidence="1">Isoprenoid biosynthesis; isopentenyl diphosphate biosynthesis via DXP pathway; isopentenyl diphosphate from 1-deoxy-D-xylulose 5-phosphate: step 6/6.</text>
</comment>
<comment type="similarity">
    <text evidence="1">Belongs to the IspH family.</text>
</comment>